<sequence>MITPQQAIERLISNNELFYDEMTDLMRQIMRGQVLPEQIAAILTGLRIKVETVSEITAAAAVMREFATKVPLENAEGLVDIVGTGGDGAKTFNISTTSMFVAAAAGAKVAKHGGRSVSSSSGAADVVEQMGANLNLTPEQVAQSIRQTGIGFMFAPNHHSAMRHVAPVRRSLGFRSIFNILGPLTNPAGAPNQLLGVFHTDLCGILSRVLQQLGSKHVLVVCGEGGLDEITLTGKTRVAELKDGKISEYDIRPEDFGIETRRNLDEIKVANTQESLLKMNEVLEGREGAARDIVLLNTAAALYAGNVAASLSDGISAAREAIDSGRAKSKKEEFVGFQPQQRCHFLGKMELG</sequence>
<proteinExistence type="inferred from homology"/>
<protein>
    <recommendedName>
        <fullName evidence="1">Anthranilate phosphoribosyltransferase</fullName>
        <ecNumber evidence="1">2.4.2.18</ecNumber>
    </recommendedName>
</protein>
<dbReference type="EC" id="2.4.2.18" evidence="1"/>
<dbReference type="EMBL" id="AM421808">
    <property type="protein sequence ID" value="CAM10221.1"/>
    <property type="molecule type" value="Genomic_DNA"/>
</dbReference>
<dbReference type="RefSeq" id="WP_002217365.1">
    <property type="nucleotide sequence ID" value="NC_008767.1"/>
</dbReference>
<dbReference type="SMR" id="A1KTN4"/>
<dbReference type="KEGG" id="nmc:NMC0948"/>
<dbReference type="HOGENOM" id="CLU_034315_2_1_4"/>
<dbReference type="UniPathway" id="UPA00035">
    <property type="reaction ID" value="UER00041"/>
</dbReference>
<dbReference type="Proteomes" id="UP000002286">
    <property type="component" value="Chromosome"/>
</dbReference>
<dbReference type="GO" id="GO:0005829">
    <property type="term" value="C:cytosol"/>
    <property type="evidence" value="ECO:0007669"/>
    <property type="project" value="TreeGrafter"/>
</dbReference>
<dbReference type="GO" id="GO:0004048">
    <property type="term" value="F:anthranilate phosphoribosyltransferase activity"/>
    <property type="evidence" value="ECO:0007669"/>
    <property type="project" value="UniProtKB-UniRule"/>
</dbReference>
<dbReference type="GO" id="GO:0000287">
    <property type="term" value="F:magnesium ion binding"/>
    <property type="evidence" value="ECO:0007669"/>
    <property type="project" value="UniProtKB-UniRule"/>
</dbReference>
<dbReference type="GO" id="GO:0000162">
    <property type="term" value="P:L-tryptophan biosynthetic process"/>
    <property type="evidence" value="ECO:0007669"/>
    <property type="project" value="UniProtKB-UniRule"/>
</dbReference>
<dbReference type="FunFam" id="1.20.970.10:FF:000006">
    <property type="entry name" value="Anthranilate phosphoribosyltransferase"/>
    <property type="match status" value="1"/>
</dbReference>
<dbReference type="FunFam" id="3.40.1030.10:FF:000002">
    <property type="entry name" value="Anthranilate phosphoribosyltransferase"/>
    <property type="match status" value="1"/>
</dbReference>
<dbReference type="Gene3D" id="3.40.1030.10">
    <property type="entry name" value="Nucleoside phosphorylase/phosphoribosyltransferase catalytic domain"/>
    <property type="match status" value="1"/>
</dbReference>
<dbReference type="Gene3D" id="1.20.970.10">
    <property type="entry name" value="Transferase, Pyrimidine Nucleoside Phosphorylase, Chain C"/>
    <property type="match status" value="1"/>
</dbReference>
<dbReference type="HAMAP" id="MF_00211">
    <property type="entry name" value="TrpD"/>
    <property type="match status" value="1"/>
</dbReference>
<dbReference type="InterPro" id="IPR005940">
    <property type="entry name" value="Anthranilate_Pribosyl_Tfrase"/>
</dbReference>
<dbReference type="InterPro" id="IPR000312">
    <property type="entry name" value="Glycosyl_Trfase_fam3"/>
</dbReference>
<dbReference type="InterPro" id="IPR017459">
    <property type="entry name" value="Glycosyl_Trfase_fam3_N_dom"/>
</dbReference>
<dbReference type="InterPro" id="IPR036320">
    <property type="entry name" value="Glycosyl_Trfase_fam3_N_dom_sf"/>
</dbReference>
<dbReference type="InterPro" id="IPR035902">
    <property type="entry name" value="Nuc_phospho_transferase"/>
</dbReference>
<dbReference type="NCBIfam" id="TIGR01245">
    <property type="entry name" value="trpD"/>
    <property type="match status" value="1"/>
</dbReference>
<dbReference type="PANTHER" id="PTHR43285">
    <property type="entry name" value="ANTHRANILATE PHOSPHORIBOSYLTRANSFERASE"/>
    <property type="match status" value="1"/>
</dbReference>
<dbReference type="PANTHER" id="PTHR43285:SF2">
    <property type="entry name" value="ANTHRANILATE PHOSPHORIBOSYLTRANSFERASE"/>
    <property type="match status" value="1"/>
</dbReference>
<dbReference type="Pfam" id="PF02885">
    <property type="entry name" value="Glycos_trans_3N"/>
    <property type="match status" value="1"/>
</dbReference>
<dbReference type="Pfam" id="PF00591">
    <property type="entry name" value="Glycos_transf_3"/>
    <property type="match status" value="1"/>
</dbReference>
<dbReference type="SUPFAM" id="SSF52418">
    <property type="entry name" value="Nucleoside phosphorylase/phosphoribosyltransferase catalytic domain"/>
    <property type="match status" value="1"/>
</dbReference>
<dbReference type="SUPFAM" id="SSF47648">
    <property type="entry name" value="Nucleoside phosphorylase/phosphoribosyltransferase N-terminal domain"/>
    <property type="match status" value="1"/>
</dbReference>
<accession>A1KTN4</accession>
<gene>
    <name evidence="1" type="primary">trpD</name>
    <name type="ordered locus">NMC0948</name>
</gene>
<name>TRPD_NEIMF</name>
<feature type="chain" id="PRO_1000043038" description="Anthranilate phosphoribosyltransferase">
    <location>
        <begin position="1"/>
        <end position="352"/>
    </location>
</feature>
<feature type="binding site" evidence="1">
    <location>
        <position position="83"/>
    </location>
    <ligand>
        <name>5-phospho-alpha-D-ribose 1-diphosphate</name>
        <dbReference type="ChEBI" id="CHEBI:58017"/>
    </ligand>
</feature>
<feature type="binding site" evidence="1">
    <location>
        <position position="83"/>
    </location>
    <ligand>
        <name>anthranilate</name>
        <dbReference type="ChEBI" id="CHEBI:16567"/>
        <label>1</label>
    </ligand>
</feature>
<feature type="binding site" evidence="1">
    <location>
        <begin position="86"/>
        <end position="87"/>
    </location>
    <ligand>
        <name>5-phospho-alpha-D-ribose 1-diphosphate</name>
        <dbReference type="ChEBI" id="CHEBI:58017"/>
    </ligand>
</feature>
<feature type="binding site" evidence="1">
    <location>
        <position position="91"/>
    </location>
    <ligand>
        <name>5-phospho-alpha-D-ribose 1-diphosphate</name>
        <dbReference type="ChEBI" id="CHEBI:58017"/>
    </ligand>
</feature>
<feature type="binding site" evidence="1">
    <location>
        <begin position="93"/>
        <end position="96"/>
    </location>
    <ligand>
        <name>5-phospho-alpha-D-ribose 1-diphosphate</name>
        <dbReference type="ChEBI" id="CHEBI:58017"/>
    </ligand>
</feature>
<feature type="binding site" evidence="1">
    <location>
        <position position="95"/>
    </location>
    <ligand>
        <name>Mg(2+)</name>
        <dbReference type="ChEBI" id="CHEBI:18420"/>
        <label>1</label>
    </ligand>
</feature>
<feature type="binding site" evidence="1">
    <location>
        <begin position="111"/>
        <end position="119"/>
    </location>
    <ligand>
        <name>5-phospho-alpha-D-ribose 1-diphosphate</name>
        <dbReference type="ChEBI" id="CHEBI:58017"/>
    </ligand>
</feature>
<feature type="binding site" evidence="1">
    <location>
        <position position="123"/>
    </location>
    <ligand>
        <name>5-phospho-alpha-D-ribose 1-diphosphate</name>
        <dbReference type="ChEBI" id="CHEBI:58017"/>
    </ligand>
</feature>
<feature type="binding site" evidence="1">
    <location>
        <position position="169"/>
    </location>
    <ligand>
        <name>anthranilate</name>
        <dbReference type="ChEBI" id="CHEBI:16567"/>
        <label>2</label>
    </ligand>
</feature>
<feature type="binding site" evidence="1">
    <location>
        <position position="228"/>
    </location>
    <ligand>
        <name>Mg(2+)</name>
        <dbReference type="ChEBI" id="CHEBI:18420"/>
        <label>2</label>
    </ligand>
</feature>
<feature type="binding site" evidence="1">
    <location>
        <position position="229"/>
    </location>
    <ligand>
        <name>Mg(2+)</name>
        <dbReference type="ChEBI" id="CHEBI:18420"/>
        <label>1</label>
    </ligand>
</feature>
<feature type="binding site" evidence="1">
    <location>
        <position position="229"/>
    </location>
    <ligand>
        <name>Mg(2+)</name>
        <dbReference type="ChEBI" id="CHEBI:18420"/>
        <label>2</label>
    </ligand>
</feature>
<keyword id="KW-0028">Amino-acid biosynthesis</keyword>
<keyword id="KW-0057">Aromatic amino acid biosynthesis</keyword>
<keyword id="KW-0328">Glycosyltransferase</keyword>
<keyword id="KW-0460">Magnesium</keyword>
<keyword id="KW-0479">Metal-binding</keyword>
<keyword id="KW-0808">Transferase</keyword>
<keyword id="KW-0822">Tryptophan biosynthesis</keyword>
<organism>
    <name type="scientific">Neisseria meningitidis serogroup C / serotype 2a (strain ATCC 700532 / DSM 15464 / FAM18)</name>
    <dbReference type="NCBI Taxonomy" id="272831"/>
    <lineage>
        <taxon>Bacteria</taxon>
        <taxon>Pseudomonadati</taxon>
        <taxon>Pseudomonadota</taxon>
        <taxon>Betaproteobacteria</taxon>
        <taxon>Neisseriales</taxon>
        <taxon>Neisseriaceae</taxon>
        <taxon>Neisseria</taxon>
    </lineage>
</organism>
<comment type="function">
    <text evidence="1">Catalyzes the transfer of the phosphoribosyl group of 5-phosphorylribose-1-pyrophosphate (PRPP) to anthranilate to yield N-(5'-phosphoribosyl)-anthranilate (PRA).</text>
</comment>
<comment type="catalytic activity">
    <reaction evidence="1">
        <text>N-(5-phospho-beta-D-ribosyl)anthranilate + diphosphate = 5-phospho-alpha-D-ribose 1-diphosphate + anthranilate</text>
        <dbReference type="Rhea" id="RHEA:11768"/>
        <dbReference type="ChEBI" id="CHEBI:16567"/>
        <dbReference type="ChEBI" id="CHEBI:18277"/>
        <dbReference type="ChEBI" id="CHEBI:33019"/>
        <dbReference type="ChEBI" id="CHEBI:58017"/>
        <dbReference type="EC" id="2.4.2.18"/>
    </reaction>
</comment>
<comment type="cofactor">
    <cofactor evidence="1">
        <name>Mg(2+)</name>
        <dbReference type="ChEBI" id="CHEBI:18420"/>
    </cofactor>
    <text evidence="1">Binds 2 magnesium ions per monomer.</text>
</comment>
<comment type="pathway">
    <text evidence="1">Amino-acid biosynthesis; L-tryptophan biosynthesis; L-tryptophan from chorismate: step 2/5.</text>
</comment>
<comment type="subunit">
    <text evidence="1">Homodimer.</text>
</comment>
<comment type="similarity">
    <text evidence="1">Belongs to the anthranilate phosphoribosyltransferase family.</text>
</comment>
<evidence type="ECO:0000255" key="1">
    <source>
        <dbReference type="HAMAP-Rule" id="MF_00211"/>
    </source>
</evidence>
<reference key="1">
    <citation type="journal article" date="2007" name="PLoS Genet.">
        <title>Meningococcal genetic variation mechanisms viewed through comparative analysis of serogroup C strain FAM18.</title>
        <authorList>
            <person name="Bentley S.D."/>
            <person name="Vernikos G.S."/>
            <person name="Snyder L.A.S."/>
            <person name="Churcher C."/>
            <person name="Arrowsmith C."/>
            <person name="Chillingworth T."/>
            <person name="Cronin A."/>
            <person name="Davis P.H."/>
            <person name="Holroyd N.E."/>
            <person name="Jagels K."/>
            <person name="Maddison M."/>
            <person name="Moule S."/>
            <person name="Rabbinowitsch E."/>
            <person name="Sharp S."/>
            <person name="Unwin L."/>
            <person name="Whitehead S."/>
            <person name="Quail M.A."/>
            <person name="Achtman M."/>
            <person name="Barrell B.G."/>
            <person name="Saunders N.J."/>
            <person name="Parkhill J."/>
        </authorList>
    </citation>
    <scope>NUCLEOTIDE SEQUENCE [LARGE SCALE GENOMIC DNA]</scope>
    <source>
        <strain>ATCC 700532 / DSM 15464 / FAM18</strain>
    </source>
</reference>